<evidence type="ECO:0000255" key="1">
    <source>
        <dbReference type="HAMAP-Rule" id="MF_01635"/>
    </source>
</evidence>
<organism>
    <name type="scientific">Pseudomonas putida (strain ATCC 700007 / DSM 6899 / JCM 31910 / BCRC 17059 / LMG 24140 / F1)</name>
    <dbReference type="NCBI Taxonomy" id="351746"/>
    <lineage>
        <taxon>Bacteria</taxon>
        <taxon>Pseudomonadati</taxon>
        <taxon>Pseudomonadota</taxon>
        <taxon>Gammaproteobacteria</taxon>
        <taxon>Pseudomonadales</taxon>
        <taxon>Pseudomonadaceae</taxon>
        <taxon>Pseudomonas</taxon>
    </lineage>
</organism>
<protein>
    <recommendedName>
        <fullName evidence="1">4-hydroxybenzoate octaprenyltransferase</fullName>
        <ecNumber evidence="1">2.5.1.39</ecNumber>
    </recommendedName>
    <alternativeName>
        <fullName evidence="1">4-HB polyprenyltransferase</fullName>
    </alternativeName>
</protein>
<proteinExistence type="inferred from homology"/>
<reference key="1">
    <citation type="submission" date="2007-05" db="EMBL/GenBank/DDBJ databases">
        <title>Complete sequence of Pseudomonas putida F1.</title>
        <authorList>
            <consortium name="US DOE Joint Genome Institute"/>
            <person name="Copeland A."/>
            <person name="Lucas S."/>
            <person name="Lapidus A."/>
            <person name="Barry K."/>
            <person name="Detter J.C."/>
            <person name="Glavina del Rio T."/>
            <person name="Hammon N."/>
            <person name="Israni S."/>
            <person name="Dalin E."/>
            <person name="Tice H."/>
            <person name="Pitluck S."/>
            <person name="Chain P."/>
            <person name="Malfatti S."/>
            <person name="Shin M."/>
            <person name="Vergez L."/>
            <person name="Schmutz J."/>
            <person name="Larimer F."/>
            <person name="Land M."/>
            <person name="Hauser L."/>
            <person name="Kyrpides N."/>
            <person name="Lykidis A."/>
            <person name="Parales R."/>
            <person name="Richardson P."/>
        </authorList>
    </citation>
    <scope>NUCLEOTIDE SEQUENCE [LARGE SCALE GENOMIC DNA]</scope>
    <source>
        <strain>ATCC 700007 / DSM 6899 / JCM 31910 / BCRC 17059 / LMG 24140 / F1</strain>
    </source>
</reference>
<sequence length="296" mass="32936">MYLQLLKSLNRLHPRAWDFVQLSRMDRPIGIYLLLWPTLSAVWIAGNGSPTLANVLIFGLGVVLMRAAGCCINDFADRKVDGHVKRTADRPLASGRVRPREALTLFAILVGVSFLLVLCTNSRTVWLSFGAVALAFCYPFMKRYTYYPQVVLGAAYSWGIPMAFTAAGGELPAGAWLLYIANLLWTVGYDTYYAMVDRDDDLKIGVKSTAILFGDADRSIILTLQLLSLGCLLLAGSRFDLGGWFHLGLLGAAACFAWEYWSTRKLDRESCFKAFLHNHWAGMLVFIGVVLDYALR</sequence>
<dbReference type="EC" id="2.5.1.39" evidence="1"/>
<dbReference type="EMBL" id="CP000712">
    <property type="protein sequence ID" value="ABQ81344.1"/>
    <property type="molecule type" value="Genomic_DNA"/>
</dbReference>
<dbReference type="SMR" id="A5WB34"/>
<dbReference type="KEGG" id="ppf:Pput_5226"/>
<dbReference type="eggNOG" id="COG0382">
    <property type="taxonomic scope" value="Bacteria"/>
</dbReference>
<dbReference type="HOGENOM" id="CLU_034879_1_0_6"/>
<dbReference type="UniPathway" id="UPA00232"/>
<dbReference type="GO" id="GO:0005886">
    <property type="term" value="C:plasma membrane"/>
    <property type="evidence" value="ECO:0007669"/>
    <property type="project" value="UniProtKB-SubCell"/>
</dbReference>
<dbReference type="GO" id="GO:0008412">
    <property type="term" value="F:4-hydroxybenzoate polyprenyltransferase activity"/>
    <property type="evidence" value="ECO:0007669"/>
    <property type="project" value="UniProtKB-UniRule"/>
</dbReference>
<dbReference type="GO" id="GO:0006744">
    <property type="term" value="P:ubiquinone biosynthetic process"/>
    <property type="evidence" value="ECO:0007669"/>
    <property type="project" value="UniProtKB-UniRule"/>
</dbReference>
<dbReference type="CDD" id="cd13959">
    <property type="entry name" value="PT_UbiA_COQ2"/>
    <property type="match status" value="1"/>
</dbReference>
<dbReference type="FunFam" id="1.10.357.140:FF:000002">
    <property type="entry name" value="4-hydroxybenzoate octaprenyltransferase"/>
    <property type="match status" value="1"/>
</dbReference>
<dbReference type="FunFam" id="1.20.120.1780:FF:000001">
    <property type="entry name" value="4-hydroxybenzoate octaprenyltransferase"/>
    <property type="match status" value="1"/>
</dbReference>
<dbReference type="Gene3D" id="1.10.357.140">
    <property type="entry name" value="UbiA prenyltransferase"/>
    <property type="match status" value="1"/>
</dbReference>
<dbReference type="Gene3D" id="1.20.120.1780">
    <property type="entry name" value="UbiA prenyltransferase"/>
    <property type="match status" value="1"/>
</dbReference>
<dbReference type="HAMAP" id="MF_01635">
    <property type="entry name" value="UbiA"/>
    <property type="match status" value="1"/>
</dbReference>
<dbReference type="InterPro" id="IPR006370">
    <property type="entry name" value="HB_polyprenyltransferase-like"/>
</dbReference>
<dbReference type="InterPro" id="IPR039653">
    <property type="entry name" value="Prenyltransferase"/>
</dbReference>
<dbReference type="InterPro" id="IPR000537">
    <property type="entry name" value="UbiA_prenyltransferase"/>
</dbReference>
<dbReference type="InterPro" id="IPR044878">
    <property type="entry name" value="UbiA_sf"/>
</dbReference>
<dbReference type="NCBIfam" id="TIGR01474">
    <property type="entry name" value="ubiA_proteo"/>
    <property type="match status" value="1"/>
</dbReference>
<dbReference type="PANTHER" id="PTHR11048:SF28">
    <property type="entry name" value="4-HYDROXYBENZOATE POLYPRENYLTRANSFERASE, MITOCHONDRIAL"/>
    <property type="match status" value="1"/>
</dbReference>
<dbReference type="PANTHER" id="PTHR11048">
    <property type="entry name" value="PRENYLTRANSFERASES"/>
    <property type="match status" value="1"/>
</dbReference>
<dbReference type="Pfam" id="PF01040">
    <property type="entry name" value="UbiA"/>
    <property type="match status" value="1"/>
</dbReference>
<comment type="function">
    <text evidence="1">Catalyzes the prenylation of para-hydroxybenzoate (PHB) with an all-trans polyprenyl group. Mediates the second step in the final reaction sequence of ubiquinone-8 (UQ-8) biosynthesis, which is the condensation of the polyisoprenoid side chain with PHB, generating the first membrane-bound Q intermediate 3-octaprenyl-4-hydroxybenzoate.</text>
</comment>
<comment type="catalytic activity">
    <reaction evidence="1">
        <text>all-trans-octaprenyl diphosphate + 4-hydroxybenzoate = 4-hydroxy-3-(all-trans-octaprenyl)benzoate + diphosphate</text>
        <dbReference type="Rhea" id="RHEA:27782"/>
        <dbReference type="ChEBI" id="CHEBI:1617"/>
        <dbReference type="ChEBI" id="CHEBI:17879"/>
        <dbReference type="ChEBI" id="CHEBI:33019"/>
        <dbReference type="ChEBI" id="CHEBI:57711"/>
        <dbReference type="EC" id="2.5.1.39"/>
    </reaction>
</comment>
<comment type="cofactor">
    <cofactor evidence="1">
        <name>Mg(2+)</name>
        <dbReference type="ChEBI" id="CHEBI:18420"/>
    </cofactor>
</comment>
<comment type="pathway">
    <text evidence="1">Cofactor biosynthesis; ubiquinone biosynthesis.</text>
</comment>
<comment type="subcellular location">
    <subcellularLocation>
        <location evidence="1">Cell inner membrane</location>
        <topology evidence="1">Multi-pass membrane protein</topology>
    </subcellularLocation>
</comment>
<comment type="similarity">
    <text evidence="1">Belongs to the UbiA prenyltransferase family.</text>
</comment>
<feature type="chain" id="PRO_1000069831" description="4-hydroxybenzoate octaprenyltransferase">
    <location>
        <begin position="1"/>
        <end position="296"/>
    </location>
</feature>
<feature type="transmembrane region" description="Helical" evidence="1">
    <location>
        <begin position="28"/>
        <end position="48"/>
    </location>
</feature>
<feature type="transmembrane region" description="Helical" evidence="1">
    <location>
        <begin position="52"/>
        <end position="72"/>
    </location>
</feature>
<feature type="transmembrane region" description="Helical" evidence="1">
    <location>
        <begin position="102"/>
        <end position="122"/>
    </location>
</feature>
<feature type="transmembrane region" description="Helical" evidence="1">
    <location>
        <begin position="145"/>
        <end position="167"/>
    </location>
</feature>
<feature type="transmembrane region" description="Helical" evidence="1">
    <location>
        <begin position="174"/>
        <end position="196"/>
    </location>
</feature>
<feature type="transmembrane region" description="Helical" evidence="1">
    <location>
        <begin position="219"/>
        <end position="239"/>
    </location>
</feature>
<feature type="transmembrane region" description="Helical" evidence="1">
    <location>
        <begin position="241"/>
        <end position="261"/>
    </location>
</feature>
<feature type="transmembrane region" description="Helical" evidence="1">
    <location>
        <begin position="275"/>
        <end position="295"/>
    </location>
</feature>
<accession>A5WB34</accession>
<keyword id="KW-0997">Cell inner membrane</keyword>
<keyword id="KW-1003">Cell membrane</keyword>
<keyword id="KW-0460">Magnesium</keyword>
<keyword id="KW-0472">Membrane</keyword>
<keyword id="KW-0808">Transferase</keyword>
<keyword id="KW-0812">Transmembrane</keyword>
<keyword id="KW-1133">Transmembrane helix</keyword>
<keyword id="KW-0831">Ubiquinone biosynthesis</keyword>
<gene>
    <name evidence="1" type="primary">ubiA</name>
    <name type="ordered locus">Pput_5226</name>
</gene>
<name>UBIA_PSEP1</name>